<protein>
    <recommendedName>
        <fullName>Defensin J1-1</fullName>
    </recommendedName>
</protein>
<organism>
    <name type="scientific">Capsicum annuum</name>
    <name type="common">Capsicum pepper</name>
    <dbReference type="NCBI Taxonomy" id="4072"/>
    <lineage>
        <taxon>Eukaryota</taxon>
        <taxon>Viridiplantae</taxon>
        <taxon>Streptophyta</taxon>
        <taxon>Embryophyta</taxon>
        <taxon>Tracheophyta</taxon>
        <taxon>Spermatophyta</taxon>
        <taxon>Magnoliopsida</taxon>
        <taxon>eudicotyledons</taxon>
        <taxon>Gunneridae</taxon>
        <taxon>Pentapetalae</taxon>
        <taxon>asterids</taxon>
        <taxon>lamiids</taxon>
        <taxon>Solanales</taxon>
        <taxon>Solanaceae</taxon>
        <taxon>Solanoideae</taxon>
        <taxon>Capsiceae</taxon>
        <taxon>Capsicum</taxon>
    </lineage>
</organism>
<comment type="function">
    <text>Plant defense peptide with antifungal activity against F.oxysporum and B.cinerea.</text>
</comment>
<comment type="subunit">
    <text>Monomer.</text>
</comment>
<comment type="subcellular location">
    <subcellularLocation>
        <location>Secreted</location>
    </subcellularLocation>
</comment>
<comment type="tissue specificity">
    <text>Expressed in orange and red ripe fruit and to a lesser extent in mature, green fruit. Present in trace in young, green fruit.</text>
</comment>
<comment type="developmental stage">
    <text>Transcripts remains very low during fruit development and dramatically increases during ripening.</text>
</comment>
<comment type="induction">
    <text>By wounding.</text>
</comment>
<comment type="similarity">
    <text evidence="3">Belongs to the DEFL family.</text>
</comment>
<keyword id="KW-0929">Antimicrobial</keyword>
<keyword id="KW-0903">Direct protein sequencing</keyword>
<keyword id="KW-1015">Disulfide bond</keyword>
<keyword id="KW-0295">Fungicide</keyword>
<keyword id="KW-0611">Plant defense</keyword>
<keyword id="KW-0964">Secreted</keyword>
<keyword id="KW-0732">Signal</keyword>
<accession>Q43413</accession>
<feature type="signal peptide" evidence="2">
    <location>
        <begin position="1"/>
        <end position="27"/>
    </location>
</feature>
<feature type="chain" id="PRO_0000007036" description="Defensin J1-1">
    <location>
        <begin position="28"/>
        <end position="75"/>
    </location>
</feature>
<feature type="disulfide bond" evidence="1">
    <location>
        <begin position="30"/>
        <end position="74"/>
    </location>
</feature>
<feature type="disulfide bond" evidence="1">
    <location>
        <begin position="41"/>
        <end position="61"/>
    </location>
</feature>
<feature type="disulfide bond" evidence="1">
    <location>
        <begin position="47"/>
        <end position="68"/>
    </location>
</feature>
<feature type="disulfide bond" evidence="1">
    <location>
        <begin position="51"/>
        <end position="70"/>
    </location>
</feature>
<evidence type="ECO:0000250" key="1"/>
<evidence type="ECO:0000269" key="2">
    <source>
    </source>
</evidence>
<evidence type="ECO:0000305" key="3"/>
<sequence>MAGFSKVVATIFLMMLLVFATDMMAEAKICEALSGNFKGLCLSSRDCGNVCRREGFTDGSCIGFRLQCFCTKPCA</sequence>
<reference key="1">
    <citation type="journal article" date="1996" name="Plant Physiol.">
        <title>Fruit-specific expression of a defensin-type gene family in bell pepper. Upregulation during ripening and upon wounding.</title>
        <authorList>
            <person name="Meyer B."/>
            <person name="Houlne G."/>
            <person name="Pozueta-Romero J."/>
            <person name="Schantz M.L."/>
            <person name="Schantz R."/>
        </authorList>
    </citation>
    <scope>NUCLEOTIDE SEQUENCE [GENOMIC DNA]</scope>
    <scope>PROTEIN SEQUENCE OF 28-69</scope>
    <scope>CHARACTERIZATION</scope>
    <source>
        <strain>cv. Yolo Wonder</strain>
        <tissue>Fruit</tissue>
    </source>
</reference>
<proteinExistence type="evidence at protein level"/>
<dbReference type="EMBL" id="X95363">
    <property type="protein sequence ID" value="CAA64653.1"/>
    <property type="molecule type" value="Genomic_DNA"/>
</dbReference>
<dbReference type="RefSeq" id="NP_001385266.1">
    <property type="nucleotide sequence ID" value="NM_001398337.1"/>
</dbReference>
<dbReference type="RefSeq" id="XP_016537483.1">
    <property type="nucleotide sequence ID" value="XM_016681997.1"/>
</dbReference>
<dbReference type="SMR" id="Q43413"/>
<dbReference type="EnsemblPlants" id="PHT73905">
    <property type="protein sequence ID" value="PHT73905"/>
    <property type="gene ID" value="T459_21182"/>
</dbReference>
<dbReference type="GeneID" id="107838797"/>
<dbReference type="Gramene" id="PHT73905">
    <property type="protein sequence ID" value="PHT73905"/>
    <property type="gene ID" value="T459_21182"/>
</dbReference>
<dbReference type="OMA" id="GICIMSS"/>
<dbReference type="OrthoDB" id="683455at2759"/>
<dbReference type="GO" id="GO:0005576">
    <property type="term" value="C:extracellular region"/>
    <property type="evidence" value="ECO:0007669"/>
    <property type="project" value="UniProtKB-SubCell"/>
</dbReference>
<dbReference type="GO" id="GO:0050832">
    <property type="term" value="P:defense response to fungus"/>
    <property type="evidence" value="ECO:0007669"/>
    <property type="project" value="UniProtKB-KW"/>
</dbReference>
<dbReference type="GO" id="GO:0031640">
    <property type="term" value="P:killing of cells of another organism"/>
    <property type="evidence" value="ECO:0007669"/>
    <property type="project" value="UniProtKB-KW"/>
</dbReference>
<dbReference type="CDD" id="cd00107">
    <property type="entry name" value="Knot1"/>
    <property type="match status" value="1"/>
</dbReference>
<dbReference type="Gene3D" id="3.30.30.10">
    <property type="entry name" value="Knottin, scorpion toxin-like"/>
    <property type="match status" value="1"/>
</dbReference>
<dbReference type="InterPro" id="IPR008176">
    <property type="entry name" value="Defensin_plant"/>
</dbReference>
<dbReference type="InterPro" id="IPR003614">
    <property type="entry name" value="Scorpion_toxin-like"/>
</dbReference>
<dbReference type="InterPro" id="IPR036574">
    <property type="entry name" value="Scorpion_toxin-like_sf"/>
</dbReference>
<dbReference type="PANTHER" id="PTHR33147:SF111">
    <property type="entry name" value="DEFENSIN-LIKE PROTEIN"/>
    <property type="match status" value="1"/>
</dbReference>
<dbReference type="PANTHER" id="PTHR33147">
    <property type="entry name" value="DEFENSIN-LIKE PROTEIN 1"/>
    <property type="match status" value="1"/>
</dbReference>
<dbReference type="Pfam" id="PF00304">
    <property type="entry name" value="Gamma-thionin"/>
    <property type="match status" value="1"/>
</dbReference>
<dbReference type="PRINTS" id="PR00288">
    <property type="entry name" value="PUROTHIONIN"/>
</dbReference>
<dbReference type="SMART" id="SM00505">
    <property type="entry name" value="Knot1"/>
    <property type="match status" value="1"/>
</dbReference>
<dbReference type="SUPFAM" id="SSF57095">
    <property type="entry name" value="Scorpion toxin-like"/>
    <property type="match status" value="1"/>
</dbReference>
<dbReference type="PROSITE" id="PS00940">
    <property type="entry name" value="GAMMA_THIONIN"/>
    <property type="match status" value="1"/>
</dbReference>
<name>DEF1_CAPAN</name>